<feature type="chain" id="PRO_0000287763" description="Cytochrome c-type biogenesis protein CycH">
    <location>
        <begin position="1"/>
        <end position="407"/>
    </location>
</feature>
<feature type="transmembrane region" description="Helical" evidence="2">
    <location>
        <begin position="4"/>
        <end position="24"/>
    </location>
</feature>
<feature type="transmembrane region" description="Helical" evidence="2">
    <location>
        <begin position="93"/>
        <end position="113"/>
    </location>
</feature>
<feature type="repeat" description="TPR 1">
    <location>
        <begin position="150"/>
        <end position="183"/>
    </location>
</feature>
<feature type="repeat" description="TPR 2">
    <location>
        <begin position="221"/>
        <end position="254"/>
    </location>
</feature>
<feature type="region of interest" description="Disordered" evidence="3">
    <location>
        <begin position="388"/>
        <end position="407"/>
    </location>
</feature>
<comment type="function">
    <text evidence="1">Required for the biogenesis of c-type cytochromes. Possible subunit of a heme lyase (By similarity).</text>
</comment>
<comment type="subcellular location">
    <subcellularLocation>
        <location evidence="4">Cell inner membrane</location>
        <topology evidence="4">Multi-pass membrane protein</topology>
        <orientation evidence="4">Periplasmic side</orientation>
    </subcellularLocation>
</comment>
<comment type="similarity">
    <text evidence="4">Belongs to the CycH family.</text>
</comment>
<dbReference type="EMBL" id="AE004091">
    <property type="protein sequence ID" value="AAG04872.1"/>
    <property type="molecule type" value="Genomic_DNA"/>
</dbReference>
<dbReference type="PIR" id="D83460">
    <property type="entry name" value="D83460"/>
</dbReference>
<dbReference type="RefSeq" id="NP_250174.1">
    <property type="nucleotide sequence ID" value="NC_002516.2"/>
</dbReference>
<dbReference type="SMR" id="Q9I3M9"/>
<dbReference type="STRING" id="208964.PA1483"/>
<dbReference type="PaxDb" id="208964-PA1483"/>
<dbReference type="GeneID" id="881742"/>
<dbReference type="KEGG" id="pae:PA1483"/>
<dbReference type="PATRIC" id="fig|208964.12.peg.1534"/>
<dbReference type="PseudoCAP" id="PA1483"/>
<dbReference type="HOGENOM" id="CLU_036074_2_1_6"/>
<dbReference type="InParanoid" id="Q9I3M9"/>
<dbReference type="OrthoDB" id="9776053at2"/>
<dbReference type="PhylomeDB" id="Q9I3M9"/>
<dbReference type="BioCyc" id="PAER208964:G1FZ6-1509-MONOMER"/>
<dbReference type="Proteomes" id="UP000002438">
    <property type="component" value="Chromosome"/>
</dbReference>
<dbReference type="GO" id="GO:0005886">
    <property type="term" value="C:plasma membrane"/>
    <property type="evidence" value="ECO:0000318"/>
    <property type="project" value="GO_Central"/>
</dbReference>
<dbReference type="GO" id="GO:0017004">
    <property type="term" value="P:cytochrome complex assembly"/>
    <property type="evidence" value="ECO:0007669"/>
    <property type="project" value="UniProtKB-KW"/>
</dbReference>
<dbReference type="Gene3D" id="1.25.40.10">
    <property type="entry name" value="Tetratricopeptide repeat domain"/>
    <property type="match status" value="1"/>
</dbReference>
<dbReference type="InterPro" id="IPR051263">
    <property type="entry name" value="C-type_cytochrome_biogenesis"/>
</dbReference>
<dbReference type="InterPro" id="IPR017560">
    <property type="entry name" value="Cyt_c_biogenesis_CcmI"/>
</dbReference>
<dbReference type="InterPro" id="IPR056412">
    <property type="entry name" value="Ig_CycH"/>
</dbReference>
<dbReference type="InterPro" id="IPR011990">
    <property type="entry name" value="TPR-like_helical_dom_sf"/>
</dbReference>
<dbReference type="InterPro" id="IPR056413">
    <property type="entry name" value="TPR_CcmH_CycH"/>
</dbReference>
<dbReference type="InterPro" id="IPR019734">
    <property type="entry name" value="TPR_rpt"/>
</dbReference>
<dbReference type="NCBIfam" id="TIGR03142">
    <property type="entry name" value="cytochro_ccmI"/>
    <property type="match status" value="1"/>
</dbReference>
<dbReference type="PANTHER" id="PTHR47870">
    <property type="entry name" value="CYTOCHROME C-TYPE BIOGENESIS PROTEIN CCMH"/>
    <property type="match status" value="1"/>
</dbReference>
<dbReference type="PANTHER" id="PTHR47870:SF4">
    <property type="entry name" value="CYTOCHROME C-TYPE BIOGENESIS PROTEIN CYCH"/>
    <property type="match status" value="1"/>
</dbReference>
<dbReference type="Pfam" id="PF23892">
    <property type="entry name" value="Ig_CycH"/>
    <property type="match status" value="1"/>
</dbReference>
<dbReference type="Pfam" id="PF23914">
    <property type="entry name" value="TPR_CcmH_CycH"/>
    <property type="match status" value="1"/>
</dbReference>
<dbReference type="SMART" id="SM00028">
    <property type="entry name" value="TPR"/>
    <property type="match status" value="2"/>
</dbReference>
<dbReference type="SUPFAM" id="SSF48452">
    <property type="entry name" value="TPR-like"/>
    <property type="match status" value="1"/>
</dbReference>
<dbReference type="PROSITE" id="PS50005">
    <property type="entry name" value="TPR"/>
    <property type="match status" value="2"/>
</dbReference>
<dbReference type="PROSITE" id="PS50293">
    <property type="entry name" value="TPR_REGION"/>
    <property type="match status" value="1"/>
</dbReference>
<sequence>MIDFWLAAGLLLLAALAFLLIPLLRGRRAQAEEDRTALNVALYQERIAELAGQQAAGTLTAEQLENGRAEAARELLADTEGSGEERSSRLGRAVPLVAALLVPLVALGLYLHWGASDKVELAREFAQAPHSMEEMTARLERAVQAQPDSAQGWYFLGRTYMTQERGADAARAFERAAELSGRQPEVLGQWAQALYFSGGKKMTAQIKALADEALKGDPAEVTTLGLLGIAAFEEQRYADAIGFWERLVSVLPNEDPARSAIQGGIQRARERMTEAGQTPPAPAAPAAAGVTLTVKVDISDAVKGQVKADDSVFVFARAVGGPPMPLAVKRLTVADLPAEVSLSDADAMMPQLKLSGFPQVELVARVSRAGNAISGEWIGRGKPLSTAQSSAQALTIDGPDQPQAARP</sequence>
<organism>
    <name type="scientific">Pseudomonas aeruginosa (strain ATCC 15692 / DSM 22644 / CIP 104116 / JCM 14847 / LMG 12228 / 1C / PRS 101 / PAO1)</name>
    <dbReference type="NCBI Taxonomy" id="208964"/>
    <lineage>
        <taxon>Bacteria</taxon>
        <taxon>Pseudomonadati</taxon>
        <taxon>Pseudomonadota</taxon>
        <taxon>Gammaproteobacteria</taxon>
        <taxon>Pseudomonadales</taxon>
        <taxon>Pseudomonadaceae</taxon>
        <taxon>Pseudomonas</taxon>
    </lineage>
</organism>
<evidence type="ECO:0000250" key="1"/>
<evidence type="ECO:0000255" key="2"/>
<evidence type="ECO:0000256" key="3">
    <source>
        <dbReference type="SAM" id="MobiDB-lite"/>
    </source>
</evidence>
<evidence type="ECO:0000305" key="4"/>
<proteinExistence type="inferred from homology"/>
<reference key="1">
    <citation type="journal article" date="2000" name="Nature">
        <title>Complete genome sequence of Pseudomonas aeruginosa PAO1, an opportunistic pathogen.</title>
        <authorList>
            <person name="Stover C.K."/>
            <person name="Pham X.-Q.T."/>
            <person name="Erwin A.L."/>
            <person name="Mizoguchi S.D."/>
            <person name="Warrener P."/>
            <person name="Hickey M.J."/>
            <person name="Brinkman F.S.L."/>
            <person name="Hufnagle W.O."/>
            <person name="Kowalik D.J."/>
            <person name="Lagrou M."/>
            <person name="Garber R.L."/>
            <person name="Goltry L."/>
            <person name="Tolentino E."/>
            <person name="Westbrock-Wadman S."/>
            <person name="Yuan Y."/>
            <person name="Brody L.L."/>
            <person name="Coulter S.N."/>
            <person name="Folger K.R."/>
            <person name="Kas A."/>
            <person name="Larbig K."/>
            <person name="Lim R.M."/>
            <person name="Smith K.A."/>
            <person name="Spencer D.H."/>
            <person name="Wong G.K.-S."/>
            <person name="Wu Z."/>
            <person name="Paulsen I.T."/>
            <person name="Reizer J."/>
            <person name="Saier M.H. Jr."/>
            <person name="Hancock R.E.W."/>
            <person name="Lory S."/>
            <person name="Olson M.V."/>
        </authorList>
    </citation>
    <scope>NUCLEOTIDE SEQUENCE [LARGE SCALE GENOMIC DNA]</scope>
    <source>
        <strain>ATCC 15692 / DSM 22644 / CIP 104116 / JCM 14847 / LMG 12228 / 1C / PRS 101 / PAO1</strain>
    </source>
</reference>
<keyword id="KW-0997">Cell inner membrane</keyword>
<keyword id="KW-1003">Cell membrane</keyword>
<keyword id="KW-0201">Cytochrome c-type biogenesis</keyword>
<keyword id="KW-0472">Membrane</keyword>
<keyword id="KW-1185">Reference proteome</keyword>
<keyword id="KW-0677">Repeat</keyword>
<keyword id="KW-0802">TPR repeat</keyword>
<keyword id="KW-0812">Transmembrane</keyword>
<keyword id="KW-1133">Transmembrane helix</keyword>
<name>CYCH_PSEAE</name>
<protein>
    <recommendedName>
        <fullName>Cytochrome c-type biogenesis protein CycH</fullName>
    </recommendedName>
</protein>
<gene>
    <name type="primary">cycH</name>
    <name type="ordered locus">PA1483</name>
</gene>
<accession>Q9I3M9</accession>